<proteinExistence type="inferred from homology"/>
<protein>
    <recommendedName>
        <fullName evidence="1">Ecotin</fullName>
    </recommendedName>
</protein>
<keyword id="KW-1015">Disulfide bond</keyword>
<keyword id="KW-0574">Periplasm</keyword>
<keyword id="KW-0646">Protease inhibitor</keyword>
<keyword id="KW-0722">Serine protease inhibitor</keyword>
<keyword id="KW-0732">Signal</keyword>
<reference key="1">
    <citation type="journal article" date="2007" name="PLoS Genet.">
        <title>The complete genome sequence of Yersinia pseudotuberculosis IP31758, the causative agent of Far East scarlet-like fever.</title>
        <authorList>
            <person name="Eppinger M."/>
            <person name="Rosovitz M.J."/>
            <person name="Fricke W.F."/>
            <person name="Rasko D.A."/>
            <person name="Kokorina G."/>
            <person name="Fayolle C."/>
            <person name="Lindler L.E."/>
            <person name="Carniel E."/>
            <person name="Ravel J."/>
        </authorList>
    </citation>
    <scope>NUCLEOTIDE SEQUENCE [LARGE SCALE GENOMIC DNA]</scope>
    <source>
        <strain>IP 31758</strain>
    </source>
</reference>
<name>ECOT_YERP3</name>
<feature type="signal peptide" evidence="1">
    <location>
        <begin position="1"/>
        <end position="21"/>
    </location>
</feature>
<feature type="chain" id="PRO_1000062062" description="Ecotin">
    <location>
        <begin position="22"/>
        <end position="169"/>
    </location>
</feature>
<feature type="site" description="Reactive bond" evidence="1">
    <location>
        <begin position="110"/>
        <end position="111"/>
    </location>
</feature>
<feature type="disulfide bond" evidence="1">
    <location>
        <begin position="76"/>
        <end position="113"/>
    </location>
</feature>
<comment type="function">
    <text evidence="1">General inhibitor of pancreatic serine proteases: inhibits chymotrypsin, trypsin, elastases, factor X, kallikrein as well as a variety of other proteases.</text>
</comment>
<comment type="subunit">
    <text evidence="1">Homodimer.</text>
</comment>
<comment type="subcellular location">
    <subcellularLocation>
        <location evidence="1">Periplasm</location>
    </subcellularLocation>
</comment>
<comment type="similarity">
    <text evidence="1">Belongs to the protease inhibitor I11 (ecotin) family.</text>
</comment>
<organism>
    <name type="scientific">Yersinia pseudotuberculosis serotype O:1b (strain IP 31758)</name>
    <dbReference type="NCBI Taxonomy" id="349747"/>
    <lineage>
        <taxon>Bacteria</taxon>
        <taxon>Pseudomonadati</taxon>
        <taxon>Pseudomonadota</taxon>
        <taxon>Gammaproteobacteria</taxon>
        <taxon>Enterobacterales</taxon>
        <taxon>Yersiniaceae</taxon>
        <taxon>Yersinia</taxon>
    </lineage>
</organism>
<evidence type="ECO:0000255" key="1">
    <source>
        <dbReference type="HAMAP-Rule" id="MF_00706"/>
    </source>
</evidence>
<dbReference type="EMBL" id="CP000720">
    <property type="protein sequence ID" value="ABS48536.1"/>
    <property type="molecule type" value="Genomic_DNA"/>
</dbReference>
<dbReference type="RefSeq" id="WP_002210815.1">
    <property type="nucleotide sequence ID" value="NC_009708.1"/>
</dbReference>
<dbReference type="SMR" id="A7FKF8"/>
<dbReference type="MEROPS" id="I11.001"/>
<dbReference type="GeneID" id="57977350"/>
<dbReference type="KEGG" id="ypi:YpsIP31758_2772"/>
<dbReference type="HOGENOM" id="CLU_111565_0_0_6"/>
<dbReference type="Proteomes" id="UP000002412">
    <property type="component" value="Chromosome"/>
</dbReference>
<dbReference type="GO" id="GO:0042597">
    <property type="term" value="C:periplasmic space"/>
    <property type="evidence" value="ECO:0007669"/>
    <property type="project" value="UniProtKB-SubCell"/>
</dbReference>
<dbReference type="GO" id="GO:0004867">
    <property type="term" value="F:serine-type endopeptidase inhibitor activity"/>
    <property type="evidence" value="ECO:0007669"/>
    <property type="project" value="UniProtKB-UniRule"/>
</dbReference>
<dbReference type="CDD" id="cd00242">
    <property type="entry name" value="Ecotin"/>
    <property type="match status" value="1"/>
</dbReference>
<dbReference type="Gene3D" id="2.60.40.550">
    <property type="entry name" value="Ecotin"/>
    <property type="match status" value="1"/>
</dbReference>
<dbReference type="HAMAP" id="MF_00706">
    <property type="entry name" value="Ecotin"/>
    <property type="match status" value="1"/>
</dbReference>
<dbReference type="InterPro" id="IPR036198">
    <property type="entry name" value="Ecotin_sf"/>
</dbReference>
<dbReference type="InterPro" id="IPR005658">
    <property type="entry name" value="Prot_inh_ecotin"/>
</dbReference>
<dbReference type="InterPro" id="IPR023084">
    <property type="entry name" value="Prot_inh_ecotin_gammaproteobac"/>
</dbReference>
<dbReference type="NCBIfam" id="NF002987">
    <property type="entry name" value="PRK03719.1"/>
    <property type="match status" value="1"/>
</dbReference>
<dbReference type="PANTHER" id="PTHR35890">
    <property type="match status" value="1"/>
</dbReference>
<dbReference type="PANTHER" id="PTHR35890:SF3">
    <property type="entry name" value="ECOTIN"/>
    <property type="match status" value="1"/>
</dbReference>
<dbReference type="Pfam" id="PF03974">
    <property type="entry name" value="Ecotin"/>
    <property type="match status" value="1"/>
</dbReference>
<dbReference type="PIRSF" id="PIRSF006865">
    <property type="entry name" value="Prot_inh_ecotin"/>
    <property type="match status" value="1"/>
</dbReference>
<dbReference type="SUPFAM" id="SSF49772">
    <property type="entry name" value="Ecotin, trypsin inhibitor"/>
    <property type="match status" value="1"/>
</dbReference>
<sequence length="169" mass="18871">MKKCSIILASVLLATSINAIADTPTPLNQQQPLEKIAPYPQAEKGMSRQVIFLEPQKDESRFKVELLIGKTLNVDCNRHMLGGNLETRTLSGWGFDYLVMDKISQPASTMMACPEDSKPQVKFVTANLGDAAMQRYNSRLPIVVYVPQGVEVKYRIWEAGEDIRSAQVK</sequence>
<gene>
    <name evidence="1" type="primary">eco</name>
    <name type="ordered locus">YpsIP31758_2772</name>
</gene>
<accession>A7FKF8</accession>